<feature type="chain" id="PRO_0000451856" description="ATP-dependent ubiquitin transferase-like protein Cap2">
    <location>
        <begin position="1"/>
        <end position="589"/>
    </location>
</feature>
<feature type="active site" description="For E2-like domain" evidence="10">
    <location>
        <position position="91"/>
    </location>
</feature>
<feature type="active site" description="For E1-like domain" evidence="10">
    <location>
        <position position="493"/>
    </location>
</feature>
<feature type="active site" description="For E1-like domain" evidence="10">
    <location>
        <position position="496"/>
    </location>
</feature>
<feature type="active site" description="For E1-like domain" evidence="10">
    <location>
        <position position="513"/>
    </location>
</feature>
<feature type="cross-link" description="Glycyl cysteine dithioester (Cys-Gly) (interchain with G-Cter in DncV)" evidence="10">
    <location>
        <position position="13"/>
    </location>
</feature>
<feature type="cross-link" description="Glycyl lysine isopeptide (Lys-Gly) (interchain with G-Cter in DncV)" evidence="10">
    <location>
        <position position="77"/>
    </location>
</feature>
<feature type="cross-link" description="Glycyl lysine isopeptide (Lys-Gly) (interchain with G-Cter in DncV)" evidence="10">
    <location>
        <position position="305"/>
    </location>
</feature>
<feature type="cross-link" description="Glycyl lysine isopeptide (Lys-Gly) (interchain with G-Cter in DncV)" evidence="10">
    <location>
        <position position="387"/>
    </location>
</feature>
<feature type="cross-link" description="Glycyl lysine isopeptide (Lys-Gly) (interchain with G-Cter in DncV)" evidence="10">
    <location>
        <position position="484"/>
    </location>
</feature>
<feature type="cross-link" description="Glycyl cysteine dithioester (Cys-Gly) (interchain with G-Cter in DncV)" evidence="10">
    <location>
        <position position="493"/>
    </location>
</feature>
<feature type="cross-link" description="Glycyl cysteine dithioester (Cys-Gly) (interchain with G-Cter in DncV)" evidence="10">
    <location>
        <position position="513"/>
    </location>
</feature>
<feature type="cross-link" description="Glycyl lysine isopeptide (Lys-Gly) (interchain with G-Cter in DncV)" evidence="10">
    <location>
        <position position="523"/>
    </location>
</feature>
<feature type="mutagenesis site" description="Loss of defense against phage lambda (partial), T4, T5 and T6 but not T2 or P1. No longer conjugates DncV to cellular proteins." evidence="3">
    <original>C</original>
    <variation>A</variation>
    <location>
        <position position="91"/>
    </location>
</feature>
<feature type="mutagenesis site" description="Loss of defense against phage lambda (partial), T4, T5 and T6 but not T2 or P1, no longer conjugates DncV to cellular proteins, no cGAMP production in vivo during T4 infection." evidence="2 3">
    <original>CYGC</original>
    <variation>AYGA</variation>
    <location>
        <begin position="493"/>
        <end position="496"/>
    </location>
</feature>
<comment type="function">
    <text evidence="2 3 6 10">CD-NTase priming component of a CBASS antiviral system (Probable) (PubMed:36848932). CBASS (cyclic oligonucleotide-based antiphage signaling system) provides immunity against bacteriophages. The CD-NTase protein (DncV) synthesizes cyclic nucleotides in response to infection; these serve as specific second messenger signals. The signals activate a diverse range of effectors, leading to bacterial cell death and thus abortive phage infection (PubMed:31533127, PubMed:36848932). A type II-A(GA) CBASS system (PubMed:32839535, PubMed:36848932).</text>
</comment>
<comment type="function">
    <text evidence="1 3">Conjugates DncV to itself in vitro and to other cellular proteins in vivo; conjugation requires ATP (PubMed:36848932). This primes DncV, upon phage infection CdnA activates and makes cyclic nucleotides (By similarity).</text>
</comment>
<comment type="function">
    <text evidence="2 3">Protects E.coli against phage infection (PubMed:31533127, PubMed:36848932). When capV and dncV are introduced in E.coli MG1655 there is 1000-fold protection against phage P1; protection against other phage (T2, T4, T5, T6 and lambda-vir) requires the 2 subsequent genes (PubMed:31533127). In another paper the capV-dncV-cap2-cap3 operon gives 10(4)-10(5)-fold protection against phages lambda, T2, T4 and T6, about 1000-fold protection against P1 and 10-fold protection against T5 (PubMed:36848932).</text>
</comment>
<comment type="subunit">
    <text evidence="1">A Cap2 dimer is bound on either side by a DncV monomer.</text>
</comment>
<comment type="induction">
    <text evidence="9">Part of a CBASS operon consisting of capV-dncV-cap2-cap3.</text>
</comment>
<comment type="domain">
    <text evidence="1">Has an N-terminal E2-like domain, a linker and a C-terminal adenylation plus E1-like domain, dimerizes via the E1-like domain.</text>
</comment>
<comment type="PTM">
    <text evidence="3">Conjugated to DncV via 5 different Lys residues and 3 Cys residues (PubMed:36848932).</text>
</comment>
<comment type="similarity">
    <text evidence="8">In the C-terminal section; belongs to the HesA/MoeB/ThiF family.</text>
</comment>
<reference key="1">
    <citation type="journal article" date="2011" name="Infect. Immun.">
        <title>A comparative genomic analysis of diverse clonal types of enterotoxigenic Escherichia coli reveals pathovar-specific conservation.</title>
        <authorList>
            <person name="Sahl J.W."/>
            <person name="Steinsland H."/>
            <person name="Redman J.C."/>
            <person name="Angiuoli S.V."/>
            <person name="Nataro J.P."/>
            <person name="Sommerfelt H."/>
            <person name="Rasko D.A."/>
        </authorList>
    </citation>
    <scope>NUCLEOTIDE SEQUENCE [LARGE SCALE GENOMIC DNA]</scope>
    <source>
        <strain>TW11681</strain>
    </source>
</reference>
<reference key="2">
    <citation type="journal article" date="2019" name="Nature">
        <title>Cyclic GMP-AMP signalling protects bacteria against viral infection.</title>
        <authorList>
            <person name="Cohen D."/>
            <person name="Melamed S."/>
            <person name="Millman A."/>
            <person name="Shulman G."/>
            <person name="Oppenheimer-Shaanan Y."/>
            <person name="Kacen A."/>
            <person name="Doron S."/>
            <person name="Amitai G."/>
            <person name="Sorek R."/>
        </authorList>
    </citation>
    <scope>ANTIVIRAL DEFENSE</scope>
    <scope>OPERON STRUCTURE</scope>
    <scope>MUTAGENESIS OF 493-CYS--CYS-496</scope>
    <source>
        <strain>TW11681</strain>
    </source>
</reference>
<reference key="3">
    <citation type="journal article" date="2020" name="Cell">
        <title>CBASS immunity uses CARF-related effectors to sense 3'-5' and 2'-5'-linked cyclic oligonucleotide signals and protect bacteria from phage infection.</title>
        <authorList>
            <person name="Lowey B."/>
            <person name="Whiteley A.T."/>
            <person name="Keszei A.F.A."/>
            <person name="Morehouse B.R."/>
            <person name="Antine S.P."/>
            <person name="Cabrera V.J."/>
            <person name="Kashin D."/>
            <person name="Schwede F."/>
            <person name="Mekalanos J.J."/>
            <person name="Shao S."/>
            <person name="Lee A.S.Y."/>
            <person name="Kranzusch P.J."/>
        </authorList>
    </citation>
    <scope>NOMENCLATURE</scope>
    <source>
        <strain>TW11681</strain>
    </source>
</reference>
<reference key="4">
    <citation type="journal article" date="2020" name="Nat. Microbiol.">
        <title>Diversity and classification of cyclic-oligonucleotide-based anti-phage signalling systems.</title>
        <authorList>
            <person name="Millman A."/>
            <person name="Melamed S."/>
            <person name="Amitai G."/>
            <person name="Sorek R."/>
        </authorList>
    </citation>
    <scope>CLASSIFICATION AND NOMENCLATURE</scope>
</reference>
<reference key="5">
    <citation type="journal article" date="2023" name="Nature">
        <title>Ubiquitin-like conjugation by bacterial cGAS enhances anti-phage defence.</title>
        <authorList>
            <person name="Jenson J.M."/>
            <person name="Li T."/>
            <person name="Du F."/>
            <person name="Ea C.K."/>
            <person name="Chen Z.J."/>
        </authorList>
    </citation>
    <scope>FUNCTION IN PROTEIN CONJUGATION</scope>
    <scope>ANTIVIRAL DEFENSE</scope>
    <scope>PUTATIVE ACTIVE SITES</scope>
    <scope>DOMAIN</scope>
    <scope>CROSS-LINKS</scope>
    <scope>MUTAGENESIS OF CYS-91 AND 493-CYS--CYS-496</scope>
    <source>
        <strain>TW11681</strain>
    </source>
</reference>
<dbReference type="EC" id="2.3.2.-" evidence="3"/>
<dbReference type="EMBL" id="AELD01000001">
    <property type="status" value="NOT_ANNOTATED_CDS"/>
    <property type="molecule type" value="Genomic_DNA"/>
</dbReference>
<dbReference type="RefSeq" id="WP_000390951.1">
    <property type="nucleotide sequence ID" value="NZ_CP035855.1"/>
</dbReference>
<dbReference type="SMR" id="P0DTF2"/>
<dbReference type="GO" id="GO:0016740">
    <property type="term" value="F:transferase activity"/>
    <property type="evidence" value="ECO:0007669"/>
    <property type="project" value="UniProtKB-KW"/>
</dbReference>
<dbReference type="GO" id="GO:0061503">
    <property type="term" value="F:tRNA threonylcarbamoyladenosine dehydratase"/>
    <property type="evidence" value="ECO:0007669"/>
    <property type="project" value="TreeGrafter"/>
</dbReference>
<dbReference type="GO" id="GO:0008641">
    <property type="term" value="F:ubiquitin-like modifier activating enzyme activity"/>
    <property type="evidence" value="ECO:0007669"/>
    <property type="project" value="InterPro"/>
</dbReference>
<dbReference type="GO" id="GO:0061504">
    <property type="term" value="P:cyclic threonylcarbamoyladenosine biosynthetic process"/>
    <property type="evidence" value="ECO:0007669"/>
    <property type="project" value="TreeGrafter"/>
</dbReference>
<dbReference type="GO" id="GO:0051607">
    <property type="term" value="P:defense response to virus"/>
    <property type="evidence" value="ECO:0007669"/>
    <property type="project" value="UniProtKB-KW"/>
</dbReference>
<dbReference type="CDD" id="cd01483">
    <property type="entry name" value="E1_enzyme_family"/>
    <property type="match status" value="1"/>
</dbReference>
<dbReference type="Gene3D" id="3.40.50.720">
    <property type="entry name" value="NAD(P)-binding Rossmann-like Domain"/>
    <property type="match status" value="1"/>
</dbReference>
<dbReference type="InterPro" id="IPR032701">
    <property type="entry name" value="Prok-E2_B_dom"/>
</dbReference>
<dbReference type="InterPro" id="IPR045886">
    <property type="entry name" value="ThiF/MoeB/HesA"/>
</dbReference>
<dbReference type="InterPro" id="IPR000594">
    <property type="entry name" value="ThiF_NAD_FAD-bd"/>
</dbReference>
<dbReference type="InterPro" id="IPR035985">
    <property type="entry name" value="Ubiquitin-activating_enz"/>
</dbReference>
<dbReference type="PANTHER" id="PTHR43267">
    <property type="entry name" value="TRNA THREONYLCARBAMOYLADENOSINE DEHYDRATASE"/>
    <property type="match status" value="1"/>
</dbReference>
<dbReference type="PANTHER" id="PTHR43267:SF1">
    <property type="entry name" value="TRNA THREONYLCARBAMOYLADENOSINE DEHYDRATASE"/>
    <property type="match status" value="1"/>
</dbReference>
<dbReference type="Pfam" id="PF14461">
    <property type="entry name" value="Prok-E2_B"/>
    <property type="match status" value="1"/>
</dbReference>
<dbReference type="Pfam" id="PF00899">
    <property type="entry name" value="ThiF"/>
    <property type="match status" value="1"/>
</dbReference>
<dbReference type="SUPFAM" id="SSF69572">
    <property type="entry name" value="Activating enzymes of the ubiquitin-like proteins"/>
    <property type="match status" value="1"/>
</dbReference>
<accession>P0DTF2</accession>
<organism>
    <name type="scientific">Escherichia coli (strain TW11681)</name>
    <dbReference type="NCBI Taxonomy" id="913088"/>
    <lineage>
        <taxon>Bacteria</taxon>
        <taxon>Pseudomonadati</taxon>
        <taxon>Pseudomonadota</taxon>
        <taxon>Gammaproteobacteria</taxon>
        <taxon>Enterobacterales</taxon>
        <taxon>Enterobacteriaceae</taxon>
        <taxon>Escherichia</taxon>
    </lineage>
</organism>
<proteinExistence type="evidence at protein level"/>
<keyword id="KW-0051">Antiviral defense</keyword>
<keyword id="KW-1017">Isopeptide bond</keyword>
<keyword id="KW-0882">Thioester bond</keyword>
<keyword id="KW-0808">Transferase</keyword>
<name>CAP2_ECOTW</name>
<gene>
    <name evidence="5" type="primary">cap2</name>
    <name type="ORF">ESG_RS0100130</name>
    <name evidence="4" type="ORF">geneC</name>
</gene>
<sequence length="589" mass="66805">MEEGRLHRVMLSCGYSFTYARNLPEKAILYSQNCQQGYYTKEYTTVAGDVKIALIIRADPFIELPIAYILELPEQFKDRLMPHISLEGFLCYVEQMEADWDSNNLEDTYREVDAQIQRTLVNSVSAAMEGSNDKKELEGEFTAYWRPSESLFVLSNANRSTRLKTFISQSVRPNGSSQVEYITVEESSPENSGKVISAWLKLRYLPKNSLKEYHISTHYISVNPSRVAGMKWPPASFRDLLSWLGKADHNAKNKVVEYIKKEGKKRYVFLFDVLKQDTFGIYVEFDLKSIDLKRYKHSAKNSTAKLSTVLGGKSVCSMYQRLGVVRADIETLLSRNTRREGSAKLSEKRIALVGCGTIGGYLAELLLRNGAGCGKGHLHLYDDDLYKPSNFGRHTLSAHDFGRYKSLSLARKLKDSVHLPTQIIGFEKQFSIRADLMQKYDIIIDATGRPPVSKRMASIVRTIALEKRPKIIHAFNDGNGRASKVFIDDGRSCYGCMVSNPEKYRNGIDSRFCHIDISREKNKNCGSTYTPYDAAVSNITASLTQMAVLSTLDPELKWTYSEHMLEGGRSLKSQFLPRQPNCPICNEYE</sequence>
<evidence type="ECO:0000250" key="1">
    <source>
        <dbReference type="UniProtKB" id="P0DX82"/>
    </source>
</evidence>
<evidence type="ECO:0000269" key="2">
    <source>
    </source>
</evidence>
<evidence type="ECO:0000269" key="3">
    <source>
    </source>
</evidence>
<evidence type="ECO:0000303" key="4">
    <source>
    </source>
</evidence>
<evidence type="ECO:0000303" key="5">
    <source>
    </source>
</evidence>
<evidence type="ECO:0000303" key="6">
    <source>
    </source>
</evidence>
<evidence type="ECO:0000303" key="7">
    <source>
    </source>
</evidence>
<evidence type="ECO:0000305" key="8"/>
<evidence type="ECO:0000305" key="9">
    <source>
    </source>
</evidence>
<evidence type="ECO:0000305" key="10">
    <source>
    </source>
</evidence>
<protein>
    <recommendedName>
        <fullName evidence="7">ATP-dependent ubiquitin transferase-like protein Cap2</fullName>
        <ecNumber evidence="3">2.3.2.-</ecNumber>
    </recommendedName>
    <alternativeName>
        <fullName evidence="5">CD-NTase-associated protein 2</fullName>
        <shortName evidence="5">Cap2</shortName>
    </alternativeName>
</protein>